<proteinExistence type="inferred from homology"/>
<protein>
    <recommendedName>
        <fullName>tRNA uridine 5-carboxymethylaminomethyl modification enzyme MnmG</fullName>
    </recommendedName>
    <alternativeName>
        <fullName>Glucose-inhibited division protein A</fullName>
    </alternativeName>
</protein>
<keyword id="KW-0963">Cytoplasm</keyword>
<keyword id="KW-0274">FAD</keyword>
<keyword id="KW-0285">Flavoprotein</keyword>
<keyword id="KW-0520">NAD</keyword>
<keyword id="KW-1185">Reference proteome</keyword>
<keyword id="KW-0819">tRNA processing</keyword>
<comment type="function">
    <text evidence="1">NAD-binding protein involved in the addition of a carboxymethylaminomethyl (cmnm) group at the wobble position (U34) of certain tRNAs, forming tRNA-cmnm(5)s(2)U34.</text>
</comment>
<comment type="cofactor">
    <cofactor evidence="1">
        <name>FAD</name>
        <dbReference type="ChEBI" id="CHEBI:57692"/>
    </cofactor>
</comment>
<comment type="subunit">
    <text evidence="1">Homodimer. Heterotetramer of two MnmE and two MnmG subunits.</text>
</comment>
<comment type="subcellular location">
    <subcellularLocation>
        <location evidence="1">Cytoplasm</location>
    </subcellularLocation>
</comment>
<comment type="similarity">
    <text evidence="3">Belongs to the MnmG family.</text>
</comment>
<organism>
    <name type="scientific">Caulobacter vibrioides (strain NA1000 / CB15N)</name>
    <name type="common">Caulobacter crescentus</name>
    <dbReference type="NCBI Taxonomy" id="565050"/>
    <lineage>
        <taxon>Bacteria</taxon>
        <taxon>Pseudomonadati</taxon>
        <taxon>Pseudomonadota</taxon>
        <taxon>Alphaproteobacteria</taxon>
        <taxon>Caulobacterales</taxon>
        <taxon>Caulobacteraceae</taxon>
        <taxon>Caulobacter</taxon>
    </lineage>
</organism>
<reference key="1">
    <citation type="submission" date="1999-06" db="EMBL/GenBank/DDBJ databases">
        <title>Partial 50K and complete gidA, gidB, parA and parB genes from Caulbacter crescentus.</title>
        <authorList>
            <person name="Ho H.-Y.H."/>
            <person name="Draper G.C."/>
            <person name="Gober J.W."/>
        </authorList>
    </citation>
    <scope>NUCLEOTIDE SEQUENCE [GENOMIC DNA]</scope>
</reference>
<reference key="2">
    <citation type="journal article" date="2010" name="J. Bacteriol.">
        <title>The genetic basis of laboratory adaptation in Caulobacter crescentus.</title>
        <authorList>
            <person name="Marks M.E."/>
            <person name="Castro-Rojas C.M."/>
            <person name="Teiling C."/>
            <person name="Du L."/>
            <person name="Kapatral V."/>
            <person name="Walunas T.L."/>
            <person name="Crosson S."/>
        </authorList>
    </citation>
    <scope>NUCLEOTIDE SEQUENCE [LARGE SCALE GENOMIC DNA]</scope>
    <source>
        <strain>NA1000 / CB15N</strain>
    </source>
</reference>
<name>MNMG_CAUVN</name>
<accession>B8GW33</accession>
<accession>Q9XBF8</accession>
<dbReference type="EMBL" id="U87804">
    <property type="protein sequence ID" value="AAD40695.1"/>
    <property type="molecule type" value="Genomic_DNA"/>
</dbReference>
<dbReference type="EMBL" id="CP001340">
    <property type="protein sequence ID" value="ACL97336.2"/>
    <property type="molecule type" value="Genomic_DNA"/>
</dbReference>
<dbReference type="RefSeq" id="WP_024266007.1">
    <property type="nucleotide sequence ID" value="NC_011916.1"/>
</dbReference>
<dbReference type="RefSeq" id="YP_002519244.2">
    <property type="nucleotide sequence ID" value="NC_011916.1"/>
</dbReference>
<dbReference type="SMR" id="B8GW33"/>
<dbReference type="GeneID" id="7332719"/>
<dbReference type="KEGG" id="ccs:CCNA_03871"/>
<dbReference type="PATRIC" id="fig|565050.3.peg.3776"/>
<dbReference type="HOGENOM" id="CLU_007831_2_2_5"/>
<dbReference type="OrthoDB" id="9815560at2"/>
<dbReference type="PhylomeDB" id="B8GW33"/>
<dbReference type="Proteomes" id="UP000001364">
    <property type="component" value="Chromosome"/>
</dbReference>
<dbReference type="GO" id="GO:0005829">
    <property type="term" value="C:cytosol"/>
    <property type="evidence" value="ECO:0007669"/>
    <property type="project" value="TreeGrafter"/>
</dbReference>
<dbReference type="GO" id="GO:0050660">
    <property type="term" value="F:flavin adenine dinucleotide binding"/>
    <property type="evidence" value="ECO:0007669"/>
    <property type="project" value="UniProtKB-UniRule"/>
</dbReference>
<dbReference type="GO" id="GO:0030488">
    <property type="term" value="P:tRNA methylation"/>
    <property type="evidence" value="ECO:0007669"/>
    <property type="project" value="TreeGrafter"/>
</dbReference>
<dbReference type="GO" id="GO:0002098">
    <property type="term" value="P:tRNA wobble uridine modification"/>
    <property type="evidence" value="ECO:0007669"/>
    <property type="project" value="InterPro"/>
</dbReference>
<dbReference type="FunFam" id="3.50.50.60:FF:000082">
    <property type="entry name" value="protein MTO1 homolog, mitochondrial isoform X1"/>
    <property type="match status" value="1"/>
</dbReference>
<dbReference type="FunFam" id="1.10.150.570:FF:000001">
    <property type="entry name" value="tRNA uridine 5-carboxymethylaminomethyl modification enzyme MnmG"/>
    <property type="match status" value="1"/>
</dbReference>
<dbReference type="FunFam" id="3.50.50.60:FF:000002">
    <property type="entry name" value="tRNA uridine 5-carboxymethylaminomethyl modification enzyme MnmG"/>
    <property type="match status" value="1"/>
</dbReference>
<dbReference type="Gene3D" id="3.50.50.60">
    <property type="entry name" value="FAD/NAD(P)-binding domain"/>
    <property type="match status" value="2"/>
</dbReference>
<dbReference type="Gene3D" id="1.10.150.570">
    <property type="entry name" value="GidA associated domain, C-terminal subdomain"/>
    <property type="match status" value="1"/>
</dbReference>
<dbReference type="Gene3D" id="1.10.10.1800">
    <property type="entry name" value="tRNA uridine 5-carboxymethylaminomethyl modification enzyme MnmG/GidA"/>
    <property type="match status" value="1"/>
</dbReference>
<dbReference type="HAMAP" id="MF_00129">
    <property type="entry name" value="MnmG_GidA"/>
    <property type="match status" value="1"/>
</dbReference>
<dbReference type="InterPro" id="IPR036188">
    <property type="entry name" value="FAD/NAD-bd_sf"/>
</dbReference>
<dbReference type="InterPro" id="IPR049312">
    <property type="entry name" value="GIDA_C_N"/>
</dbReference>
<dbReference type="InterPro" id="IPR004416">
    <property type="entry name" value="MnmG"/>
</dbReference>
<dbReference type="InterPro" id="IPR002218">
    <property type="entry name" value="MnmG-rel"/>
</dbReference>
<dbReference type="InterPro" id="IPR020595">
    <property type="entry name" value="MnmG-rel_CS"/>
</dbReference>
<dbReference type="InterPro" id="IPR026904">
    <property type="entry name" value="MnmG_C"/>
</dbReference>
<dbReference type="InterPro" id="IPR047001">
    <property type="entry name" value="MnmG_C_subdom"/>
</dbReference>
<dbReference type="InterPro" id="IPR044920">
    <property type="entry name" value="MnmG_C_subdom_sf"/>
</dbReference>
<dbReference type="InterPro" id="IPR040131">
    <property type="entry name" value="MnmG_N"/>
</dbReference>
<dbReference type="NCBIfam" id="TIGR00136">
    <property type="entry name" value="mnmG_gidA"/>
    <property type="match status" value="1"/>
</dbReference>
<dbReference type="PANTHER" id="PTHR11806">
    <property type="entry name" value="GLUCOSE INHIBITED DIVISION PROTEIN A"/>
    <property type="match status" value="1"/>
</dbReference>
<dbReference type="PANTHER" id="PTHR11806:SF0">
    <property type="entry name" value="PROTEIN MTO1 HOMOLOG, MITOCHONDRIAL"/>
    <property type="match status" value="1"/>
</dbReference>
<dbReference type="Pfam" id="PF01134">
    <property type="entry name" value="GIDA"/>
    <property type="match status" value="1"/>
</dbReference>
<dbReference type="Pfam" id="PF21680">
    <property type="entry name" value="GIDA_C_1st"/>
    <property type="match status" value="1"/>
</dbReference>
<dbReference type="Pfam" id="PF13932">
    <property type="entry name" value="SAM_GIDA_C"/>
    <property type="match status" value="1"/>
</dbReference>
<dbReference type="PRINTS" id="PR00411">
    <property type="entry name" value="PNDRDTASEI"/>
</dbReference>
<dbReference type="SMART" id="SM01228">
    <property type="entry name" value="GIDA_assoc_3"/>
    <property type="match status" value="1"/>
</dbReference>
<dbReference type="SUPFAM" id="SSF51905">
    <property type="entry name" value="FAD/NAD(P)-binding domain"/>
    <property type="match status" value="1"/>
</dbReference>
<dbReference type="PROSITE" id="PS01280">
    <property type="entry name" value="GIDA_1"/>
    <property type="match status" value="1"/>
</dbReference>
<dbReference type="PROSITE" id="PS01281">
    <property type="entry name" value="GIDA_2"/>
    <property type="match status" value="1"/>
</dbReference>
<sequence>MSKSWDVIVIGGGHAGCEAAAASARAGARTLLLTHKLETIGEMSCNPAIGGLGKGHLVREIDALDGVMGRMADKAGIQFRMLNRSKGPAVRGPRSQIDRRLYREAMQAELFSTGNLDIIAAAAEDLIVEDGKVAGAVDAAGQAYRAPRVILTTGTFLKGVIHRGEDRIPAGRVGDQPAIGLSDRLYGLGFQMGRLKTGTPARLDGKTIAWDRLESQAADDTPVPFSYLNHRIDVPQIACGVTYTTEETHRIIAERIGESLVYSGRATGVGPRYCPSIEDKVVRFADKTSHQIFLEPEGLDDDTVYPNGISTSVSEETQLLFLRTIPGLEQVEVIRYGYAIEYDYVDPRELYPTLETKRLPGLYLAGQINGTTGYEEAGAQGLVAGLNAALAVQGREPAIFARDEAYIGVMIDDLVTRGVTEPYRMFTSRAEFRLTLRADNADQRLSDRGISLGVVGPVRAAAWTEKKARLDAARAFARSVTLTPNEAVKAGFKVNSDGVRRDVFAMLAYPDVTLDDLGRIWPEVFTWNTDVREQIEIEAAYAGYLDRQRADAESLRKDEDLRLPADLDYAEIGSLSNEVRGKLARVRPLTLGQAARIEGVTPGALTALLAHVRRGRAA</sequence>
<evidence type="ECO:0000250" key="1"/>
<evidence type="ECO:0000255" key="2"/>
<evidence type="ECO:0000305" key="3"/>
<feature type="chain" id="PRO_0000378291" description="tRNA uridine 5-carboxymethylaminomethyl modification enzyme MnmG">
    <location>
        <begin position="1"/>
        <end position="618"/>
    </location>
</feature>
<feature type="binding site" evidence="1">
    <location>
        <begin position="11"/>
        <end position="16"/>
    </location>
    <ligand>
        <name>FAD</name>
        <dbReference type="ChEBI" id="CHEBI:57692"/>
    </ligand>
</feature>
<feature type="binding site" evidence="2">
    <location>
        <begin position="270"/>
        <end position="284"/>
    </location>
    <ligand>
        <name>NAD(+)</name>
        <dbReference type="ChEBI" id="CHEBI:57540"/>
    </ligand>
</feature>
<gene>
    <name type="primary">mnmG</name>
    <name type="synonym">gidA</name>
    <name type="ordered locus">CCNA_03871</name>
</gene>